<proteinExistence type="evidence at transcript level"/>
<sequence length="333" mass="36581">MSATTLPNVSVAIIGAGIGGLTLGAFLRRLGIPFVILERTAVLTPLGAGISLAPNCLAALEQLGLYETIRQNAQELRGINVYREKRCWGTIDFGLAKQWFGYNVLSIERYEFHRYLYEAAGGAGVVQLGWDVARIEGLENADGDLRVISADGREVHTDIVVGADGIRSVTRRILSRSMGLQPENTIRFTGRVHMSGYTKPLSHLSTTDLGIGHWMLYNDCILTTWPCKENRQWFIGVKAAPPDEKSPDRSVWKGATSDTVNAVYGSRFHPFGEDGTVEASMYAIPAPAIAGNSRDDKLSIIPNASSLATSSRKPTSRTWFGAEWRSWVMVYRT</sequence>
<comment type="function">
    <text evidence="5 8">FAD-dependent monooxygenase; part of the gene cluster that mediates the biosynthesis of pyranterreones, a family of antioxidative compounds (PubMed:32077283). The first step of pyranonigrins biosynthesis is performed by the hybrid PKS-NRPS synthetase pytA that condenses 4 malonyl-CoA units ato the acetyl starter unit by the modular PKS of pytA (PubMed:32077283). The acyl chain is then connected to an L-serine through the amide bond by the modular NRPS of pytA (PubMed:32077283). A tetramic acid is formed and released from the PKS-NRPS pytA to give pyranterreone 5 with the help of the thioesterase pytI (PubMed:32077283). Pyranterreone 5 could be methylated by pytC to afford pyranterreone 6 (Probable). Both pyranterreones 5 and 6 are subsequently oxidized by the FAD-linked oxidoreductase pytB and the cytochrome P450 monooxygenase pytD to form the fused gamma-pyrone core, resulting in pyranterreones 7 and 11, respectively (PubMed:32077283). The hydroxy group at C-8 of pyranterreones 7 and 11 are dehydrated by the aspartyl protease pytH to form a delta-7 double bond to give pyranterreones 3 and 1, 2 accordingly (PubMed:32077283). The exo-methylene of pyranterreone 3 could be reduced into a pendant methyl by reductase pytE to provide pyranterreone 4, also known as cordylactam (Probable). Pyranterreone 4 can be reconverted to pyranterreone 3 through pytB-catalyzed dehydrogenation or further oxidized to pyranterreones 9 and 10 (Probable).</text>
</comment>
<comment type="cofactor">
    <cofactor evidence="1">
        <name>FAD</name>
        <dbReference type="ChEBI" id="CHEBI:57692"/>
    </cofactor>
</comment>
<comment type="pathway">
    <text evidence="5">Secondary metabolite biosynthesis.</text>
</comment>
<comment type="subcellular location">
    <subcellularLocation>
        <location evidence="3">Membrane</location>
        <topology evidence="3">Single-pass membrane protein</topology>
    </subcellularLocation>
</comment>
<comment type="induction">
    <text evidence="5">Expression is positively regulated by the cluster-specific transcription factor pytR.</text>
</comment>
<comment type="disruption phenotype">
    <text evidence="5">Abolishes the production of most pyranterreones, but accumulates high amounts of pyranterreone 5.</text>
</comment>
<comment type="similarity">
    <text evidence="7">Belongs to the paxM FAD-dependent monooxygenase family.</text>
</comment>
<feature type="chain" id="PRO_0000450472" description="FAD-dependent monooxygenase pytG">
    <location>
        <begin position="1"/>
        <end position="333"/>
    </location>
</feature>
<feature type="transmembrane region" description="Helical" evidence="3">
    <location>
        <begin position="6"/>
        <end position="26"/>
    </location>
</feature>
<feature type="binding site" evidence="2">
    <location>
        <position position="38"/>
    </location>
    <ligand>
        <name>FAD</name>
        <dbReference type="ChEBI" id="CHEBI:57692"/>
    </ligand>
</feature>
<feature type="binding site" evidence="2">
    <location>
        <position position="109"/>
    </location>
    <ligand>
        <name>FAD</name>
        <dbReference type="ChEBI" id="CHEBI:57692"/>
    </ligand>
</feature>
<feature type="glycosylation site" description="N-linked (GlcNAc...) asparagine" evidence="4">
    <location>
        <position position="303"/>
    </location>
</feature>
<organism>
    <name type="scientific">Aspergillus terreus (strain NIH 2624 / FGSC A1156)</name>
    <dbReference type="NCBI Taxonomy" id="341663"/>
    <lineage>
        <taxon>Eukaryota</taxon>
        <taxon>Fungi</taxon>
        <taxon>Dikarya</taxon>
        <taxon>Ascomycota</taxon>
        <taxon>Pezizomycotina</taxon>
        <taxon>Eurotiomycetes</taxon>
        <taxon>Eurotiomycetidae</taxon>
        <taxon>Eurotiales</taxon>
        <taxon>Aspergillaceae</taxon>
        <taxon>Aspergillus</taxon>
        <taxon>Aspergillus subgen. Circumdati</taxon>
    </lineage>
</organism>
<protein>
    <recommendedName>
        <fullName evidence="6">FAD-dependent monooxygenase pytG</fullName>
        <ecNumber evidence="8">1.-.-.-</ecNumber>
    </recommendedName>
    <alternativeName>
        <fullName evidence="6">Pyranterreones biosynthesis cluster protein G</fullName>
    </alternativeName>
</protein>
<evidence type="ECO:0000250" key="1">
    <source>
        <dbReference type="UniProtKB" id="A6T923"/>
    </source>
</evidence>
<evidence type="ECO:0000250" key="2">
    <source>
        <dbReference type="UniProtKB" id="B8M9J8"/>
    </source>
</evidence>
<evidence type="ECO:0000255" key="3"/>
<evidence type="ECO:0000255" key="4">
    <source>
        <dbReference type="PROSITE-ProRule" id="PRU00498"/>
    </source>
</evidence>
<evidence type="ECO:0000269" key="5">
    <source>
    </source>
</evidence>
<evidence type="ECO:0000303" key="6">
    <source>
    </source>
</evidence>
<evidence type="ECO:0000305" key="7"/>
<evidence type="ECO:0000305" key="8">
    <source>
    </source>
</evidence>
<reference key="1">
    <citation type="submission" date="2005-09" db="EMBL/GenBank/DDBJ databases">
        <title>Annotation of the Aspergillus terreus NIH2624 genome.</title>
        <authorList>
            <person name="Birren B.W."/>
            <person name="Lander E.S."/>
            <person name="Galagan J.E."/>
            <person name="Nusbaum C."/>
            <person name="Devon K."/>
            <person name="Henn M."/>
            <person name="Ma L.-J."/>
            <person name="Jaffe D.B."/>
            <person name="Butler J."/>
            <person name="Alvarez P."/>
            <person name="Gnerre S."/>
            <person name="Grabherr M."/>
            <person name="Kleber M."/>
            <person name="Mauceli E.W."/>
            <person name="Brockman W."/>
            <person name="Rounsley S."/>
            <person name="Young S.K."/>
            <person name="LaButti K."/>
            <person name="Pushparaj V."/>
            <person name="DeCaprio D."/>
            <person name="Crawford M."/>
            <person name="Koehrsen M."/>
            <person name="Engels R."/>
            <person name="Montgomery P."/>
            <person name="Pearson M."/>
            <person name="Howarth C."/>
            <person name="Larson L."/>
            <person name="Luoma S."/>
            <person name="White J."/>
            <person name="Alvarado L."/>
            <person name="Kodira C.D."/>
            <person name="Zeng Q."/>
            <person name="Oleary S."/>
            <person name="Yandava C."/>
            <person name="Denning D.W."/>
            <person name="Nierman W.C."/>
            <person name="Milne T."/>
            <person name="Madden K."/>
        </authorList>
    </citation>
    <scope>NUCLEOTIDE SEQUENCE [LARGE SCALE GENOMIC DNA]</scope>
    <source>
        <strain>NIH 2624 / FGSC A1156</strain>
    </source>
</reference>
<reference key="2">
    <citation type="journal article" date="2020" name="J. Nat. Prod.">
        <title>Discovery and characterization of a PKS-NRPS hybrid in Aspergillus terreus by genome mining.</title>
        <authorList>
            <person name="Tang S."/>
            <person name="Zhang W."/>
            <person name="Li Z."/>
            <person name="Li H."/>
            <person name="Geng C."/>
            <person name="Huang X."/>
            <person name="Lu X."/>
        </authorList>
    </citation>
    <scope>INDUCTION</scope>
    <scope>FUNCTION</scope>
    <scope>DISRUPTION PHENOTYPE</scope>
    <scope>PATHWAY</scope>
</reference>
<name>PYTG_ASPTN</name>
<dbReference type="EC" id="1.-.-.-" evidence="8"/>
<dbReference type="EMBL" id="CH476594">
    <property type="protein sequence ID" value="EAU39564.1"/>
    <property type="molecule type" value="Genomic_DNA"/>
</dbReference>
<dbReference type="RefSeq" id="XP_001211004.1">
    <property type="nucleotide sequence ID" value="XM_001211004.1"/>
</dbReference>
<dbReference type="SMR" id="Q0CZG6"/>
<dbReference type="STRING" id="341663.Q0CZG6"/>
<dbReference type="GlyCosmos" id="Q0CZG6">
    <property type="glycosylation" value="1 site, No reported glycans"/>
</dbReference>
<dbReference type="EnsemblFungi" id="EAU39564">
    <property type="protein sequence ID" value="EAU39564"/>
    <property type="gene ID" value="ATEG_00918"/>
</dbReference>
<dbReference type="GeneID" id="4355681"/>
<dbReference type="VEuPathDB" id="FungiDB:ATEG_00918"/>
<dbReference type="eggNOG" id="KOG2614">
    <property type="taxonomic scope" value="Eukaryota"/>
</dbReference>
<dbReference type="HOGENOM" id="CLU_1004639_0_0_1"/>
<dbReference type="OMA" id="HAHASTH"/>
<dbReference type="OrthoDB" id="16820at2759"/>
<dbReference type="Proteomes" id="UP000007963">
    <property type="component" value="Unassembled WGS sequence"/>
</dbReference>
<dbReference type="GO" id="GO:0016020">
    <property type="term" value="C:membrane"/>
    <property type="evidence" value="ECO:0007669"/>
    <property type="project" value="UniProtKB-SubCell"/>
</dbReference>
<dbReference type="GO" id="GO:0071949">
    <property type="term" value="F:FAD binding"/>
    <property type="evidence" value="ECO:0007669"/>
    <property type="project" value="InterPro"/>
</dbReference>
<dbReference type="GO" id="GO:0004497">
    <property type="term" value="F:monooxygenase activity"/>
    <property type="evidence" value="ECO:0007669"/>
    <property type="project" value="UniProtKB-KW"/>
</dbReference>
<dbReference type="Gene3D" id="3.50.50.60">
    <property type="entry name" value="FAD/NAD(P)-binding domain"/>
    <property type="match status" value="1"/>
</dbReference>
<dbReference type="InterPro" id="IPR002938">
    <property type="entry name" value="FAD-bd"/>
</dbReference>
<dbReference type="InterPro" id="IPR050493">
    <property type="entry name" value="FAD-dep_Monooxygenase_BioMet"/>
</dbReference>
<dbReference type="InterPro" id="IPR036188">
    <property type="entry name" value="FAD/NAD-bd_sf"/>
</dbReference>
<dbReference type="PANTHER" id="PTHR13789">
    <property type="entry name" value="MONOOXYGENASE"/>
    <property type="match status" value="1"/>
</dbReference>
<dbReference type="PANTHER" id="PTHR13789:SF309">
    <property type="entry name" value="PUTATIVE (AFU_ORTHOLOGUE AFUA_6G14510)-RELATED"/>
    <property type="match status" value="1"/>
</dbReference>
<dbReference type="Pfam" id="PF01494">
    <property type="entry name" value="FAD_binding_3"/>
    <property type="match status" value="1"/>
</dbReference>
<dbReference type="PRINTS" id="PR00420">
    <property type="entry name" value="RNGMNOXGNASE"/>
</dbReference>
<dbReference type="SUPFAM" id="SSF51905">
    <property type="entry name" value="FAD/NAD(P)-binding domain"/>
    <property type="match status" value="1"/>
</dbReference>
<accession>Q0CZG6</accession>
<keyword id="KW-0274">FAD</keyword>
<keyword id="KW-0285">Flavoprotein</keyword>
<keyword id="KW-0325">Glycoprotein</keyword>
<keyword id="KW-0472">Membrane</keyword>
<keyword id="KW-0503">Monooxygenase</keyword>
<keyword id="KW-0560">Oxidoreductase</keyword>
<keyword id="KW-1185">Reference proteome</keyword>
<keyword id="KW-0812">Transmembrane</keyword>
<keyword id="KW-1133">Transmembrane helix</keyword>
<gene>
    <name evidence="6" type="primary">pytG</name>
    <name type="ORF">ATEG_00918</name>
</gene>